<dbReference type="EMBL" id="CP000159">
    <property type="protein sequence ID" value="ABC45620.1"/>
    <property type="status" value="ALT_INIT"/>
    <property type="molecule type" value="Genomic_DNA"/>
</dbReference>
<dbReference type="RefSeq" id="WP_043551797.1">
    <property type="nucleotide sequence ID" value="NC_007677.1"/>
</dbReference>
<dbReference type="RefSeq" id="YP_444388.1">
    <property type="nucleotide sequence ID" value="NC_007677.1"/>
</dbReference>
<dbReference type="SMR" id="Q2S5Z3"/>
<dbReference type="STRING" id="309807.SRU_0242"/>
<dbReference type="EnsemblBacteria" id="ABC45620">
    <property type="protein sequence ID" value="ABC45620"/>
    <property type="gene ID" value="SRU_0242"/>
</dbReference>
<dbReference type="KEGG" id="sru:SRU_0242"/>
<dbReference type="PATRIC" id="fig|309807.25.peg.246"/>
<dbReference type="eggNOG" id="ENOG502ZBVN">
    <property type="taxonomic scope" value="Bacteria"/>
</dbReference>
<dbReference type="HOGENOM" id="CLU_1244607_0_0_10"/>
<dbReference type="OrthoDB" id="9793981at2"/>
<dbReference type="Proteomes" id="UP000008674">
    <property type="component" value="Chromosome"/>
</dbReference>
<dbReference type="GO" id="GO:0045454">
    <property type="term" value="P:cell redox homeostasis"/>
    <property type="evidence" value="ECO:0000250"/>
    <property type="project" value="UniProtKB"/>
</dbReference>
<dbReference type="Gene3D" id="3.40.30.10">
    <property type="entry name" value="Glutaredoxin"/>
    <property type="match status" value="1"/>
</dbReference>
<dbReference type="InterPro" id="IPR009474">
    <property type="entry name" value="BrxB/BrxA"/>
</dbReference>
<dbReference type="NCBIfam" id="TIGR04191">
    <property type="entry name" value="YphP_YqiW"/>
    <property type="match status" value="1"/>
</dbReference>
<dbReference type="PANTHER" id="PTHR40052:SF2">
    <property type="entry name" value="BACILLIREDOXIN BRXA"/>
    <property type="match status" value="1"/>
</dbReference>
<dbReference type="PANTHER" id="PTHR40052">
    <property type="entry name" value="UPF0403 PROTEIN YQIW-RELATED"/>
    <property type="match status" value="1"/>
</dbReference>
<dbReference type="Pfam" id="PF06491">
    <property type="entry name" value="Disulph_isomer"/>
    <property type="match status" value="1"/>
</dbReference>
<gene>
    <name type="ordered locus">SRU_0242</name>
</gene>
<organism>
    <name type="scientific">Salinibacter ruber (strain DSM 13855 / M31)</name>
    <dbReference type="NCBI Taxonomy" id="309807"/>
    <lineage>
        <taxon>Bacteria</taxon>
        <taxon>Pseudomonadati</taxon>
        <taxon>Rhodothermota</taxon>
        <taxon>Rhodothermia</taxon>
        <taxon>Rhodothermales</taxon>
        <taxon>Salinibacteraceae</taxon>
        <taxon>Salinibacter</taxon>
    </lineage>
</organism>
<accession>Q2S5Z3</accession>
<name>Y242_SALRD</name>
<protein>
    <recommendedName>
        <fullName evidence="2">Bacilliredoxin SRU_0242</fullName>
    </recommendedName>
</protein>
<comment type="similarity">
    <text evidence="2">Belongs to the bacilliredoxin family.</text>
</comment>
<comment type="sequence caution" evidence="2">
    <conflict type="erroneous initiation">
        <sequence resource="EMBL-CDS" id="ABC45620"/>
    </conflict>
</comment>
<sequence>MPYPKSMVEPMRKELTRLGIDELKSPDDVDAAFGAAEDETLLLIINSVCGCAAGGARPAVAQALETGPTPDHAVTVFAGQDVAATDYVRDTHLPGIPPSSPFMALFRNGQPVYVIERKHIEGREPAAISADLVEALQAYCTDEAPPSDAPSRPDLSSSPNAGGLPSTFQSIS</sequence>
<proteinExistence type="inferred from homology"/>
<feature type="chain" id="PRO_0000271994" description="Bacilliredoxin SRU_0242">
    <location>
        <begin position="1"/>
        <end position="172"/>
    </location>
</feature>
<feature type="region of interest" description="Disordered" evidence="1">
    <location>
        <begin position="141"/>
        <end position="172"/>
    </location>
</feature>
<feature type="compositionally biased region" description="Polar residues" evidence="1">
    <location>
        <begin position="154"/>
        <end position="172"/>
    </location>
</feature>
<keyword id="KW-1185">Reference proteome</keyword>
<reference key="1">
    <citation type="journal article" date="2005" name="Proc. Natl. Acad. Sci. U.S.A.">
        <title>The genome of Salinibacter ruber: convergence and gene exchange among hyperhalophilic bacteria and archaea.</title>
        <authorList>
            <person name="Mongodin E.F."/>
            <person name="Nelson K.E."/>
            <person name="Daugherty S."/>
            <person name="DeBoy R.T."/>
            <person name="Wister J."/>
            <person name="Khouri H."/>
            <person name="Weidman J."/>
            <person name="Walsh D.A."/>
            <person name="Papke R.T."/>
            <person name="Sanchez Perez G."/>
            <person name="Sharma A.K."/>
            <person name="Nesbo C.L."/>
            <person name="MacLeod D."/>
            <person name="Bapteste E."/>
            <person name="Doolittle W.F."/>
            <person name="Charlebois R.L."/>
            <person name="Legault B."/>
            <person name="Rodriguez-Valera F."/>
        </authorList>
    </citation>
    <scope>NUCLEOTIDE SEQUENCE [LARGE SCALE GENOMIC DNA]</scope>
    <source>
        <strain>DSM 13855 / CECT 5946 / M31</strain>
    </source>
</reference>
<evidence type="ECO:0000256" key="1">
    <source>
        <dbReference type="SAM" id="MobiDB-lite"/>
    </source>
</evidence>
<evidence type="ECO:0000305" key="2"/>